<organism>
    <name type="scientific">Arabidopsis thaliana</name>
    <name type="common">Mouse-ear cress</name>
    <dbReference type="NCBI Taxonomy" id="3702"/>
    <lineage>
        <taxon>Eukaryota</taxon>
        <taxon>Viridiplantae</taxon>
        <taxon>Streptophyta</taxon>
        <taxon>Embryophyta</taxon>
        <taxon>Tracheophyta</taxon>
        <taxon>Spermatophyta</taxon>
        <taxon>Magnoliopsida</taxon>
        <taxon>eudicotyledons</taxon>
        <taxon>Gunneridae</taxon>
        <taxon>Pentapetalae</taxon>
        <taxon>rosids</taxon>
        <taxon>malvids</taxon>
        <taxon>Brassicales</taxon>
        <taxon>Brassicaceae</taxon>
        <taxon>Camelineae</taxon>
        <taxon>Arabidopsis</taxon>
    </lineage>
</organism>
<sequence length="95" mass="10920">MSAADKKPLIPPSHITIKIKSQDDICVYFRIKRDVELRTMMQAYSDKVGQQMSAFRFHCDGIRIKPNQTPNELDLEDGDEIDAFVDQIAGFSHRH</sequence>
<reference key="1">
    <citation type="journal article" date="2000" name="DNA Res.">
        <title>Structural analysis of Arabidopsis thaliana chromosome 5. X. Sequence features of the regions of 3,076,755 bp covered by sixty P1 and TAC clones.</title>
        <authorList>
            <person name="Sato S."/>
            <person name="Nakamura Y."/>
            <person name="Kaneko T."/>
            <person name="Katoh T."/>
            <person name="Asamizu E."/>
            <person name="Kotani H."/>
            <person name="Tabata S."/>
        </authorList>
    </citation>
    <scope>NUCLEOTIDE SEQUENCE [LARGE SCALE GENOMIC DNA]</scope>
    <source>
        <strain>cv. Columbia</strain>
    </source>
</reference>
<reference key="2">
    <citation type="journal article" date="2017" name="Plant J.">
        <title>Araport11: a complete reannotation of the Arabidopsis thaliana reference genome.</title>
        <authorList>
            <person name="Cheng C.Y."/>
            <person name="Krishnakumar V."/>
            <person name="Chan A.P."/>
            <person name="Thibaud-Nissen F."/>
            <person name="Schobel S."/>
            <person name="Town C.D."/>
        </authorList>
    </citation>
    <scope>GENOME REANNOTATION</scope>
    <source>
        <strain>cv. Columbia</strain>
    </source>
</reference>
<evidence type="ECO:0000250" key="1"/>
<evidence type="ECO:0000255" key="2">
    <source>
        <dbReference type="PROSITE-ProRule" id="PRU00214"/>
    </source>
</evidence>
<evidence type="ECO:0000305" key="3"/>
<proteinExistence type="evidence at protein level"/>
<accession>Q3E8A8</accession>
<accession>F4K695</accession>
<name>SUMO7_ARATH</name>
<dbReference type="EMBL" id="AB018120">
    <property type="status" value="NOT_ANNOTATED_CDS"/>
    <property type="molecule type" value="Genomic_DNA"/>
</dbReference>
<dbReference type="EMBL" id="CP002688">
    <property type="protein sequence ID" value="ANM71062.1"/>
    <property type="molecule type" value="Genomic_DNA"/>
</dbReference>
<dbReference type="RefSeq" id="NP_001332619.1">
    <property type="nucleotide sequence ID" value="NM_001345166.1"/>
</dbReference>
<dbReference type="SMR" id="Q3E8A8"/>
<dbReference type="STRING" id="3702.Q3E8A8"/>
<dbReference type="PaxDb" id="3702-AT5G55855.1"/>
<dbReference type="EnsemblPlants" id="AT5G55855.2">
    <property type="protein sequence ID" value="AT5G55855.2"/>
    <property type="gene ID" value="AT5G55855"/>
</dbReference>
<dbReference type="GeneID" id="835680"/>
<dbReference type="Gramene" id="AT5G55855.2">
    <property type="protein sequence ID" value="AT5G55855.2"/>
    <property type="gene ID" value="AT5G55855"/>
</dbReference>
<dbReference type="KEGG" id="ath:AT5G55855"/>
<dbReference type="Araport" id="AT5G55855"/>
<dbReference type="TAIR" id="AT5G55855"/>
<dbReference type="InParanoid" id="Q3E8A8"/>
<dbReference type="OMA" id="ARITPHQ"/>
<dbReference type="PhylomeDB" id="Q3E8A8"/>
<dbReference type="PRO" id="PR:Q3E8A8"/>
<dbReference type="Proteomes" id="UP000006548">
    <property type="component" value="Chromosome 5"/>
</dbReference>
<dbReference type="ExpressionAtlas" id="Q3E8A8">
    <property type="expression patterns" value="baseline"/>
</dbReference>
<dbReference type="GO" id="GO:0005737">
    <property type="term" value="C:cytoplasm"/>
    <property type="evidence" value="ECO:0007669"/>
    <property type="project" value="UniProtKB-SubCell"/>
</dbReference>
<dbReference type="GO" id="GO:0005634">
    <property type="term" value="C:nucleus"/>
    <property type="evidence" value="ECO:0007669"/>
    <property type="project" value="UniProtKB-SubCell"/>
</dbReference>
<dbReference type="Gene3D" id="3.10.20.90">
    <property type="entry name" value="Phosphatidylinositol 3-kinase Catalytic Subunit, Chain A, domain 1"/>
    <property type="match status" value="1"/>
</dbReference>
<dbReference type="InterPro" id="IPR022617">
    <property type="entry name" value="Rad60/SUMO-like_dom"/>
</dbReference>
<dbReference type="InterPro" id="IPR000626">
    <property type="entry name" value="Ubiquitin-like_dom"/>
</dbReference>
<dbReference type="InterPro" id="IPR029071">
    <property type="entry name" value="Ubiquitin-like_domsf"/>
</dbReference>
<dbReference type="PANTHER" id="PTHR10562">
    <property type="entry name" value="SMALL UBIQUITIN-RELATED MODIFIER"/>
    <property type="match status" value="1"/>
</dbReference>
<dbReference type="Pfam" id="PF11976">
    <property type="entry name" value="Rad60-SLD"/>
    <property type="match status" value="1"/>
</dbReference>
<dbReference type="SUPFAM" id="SSF54236">
    <property type="entry name" value="Ubiquitin-like"/>
    <property type="match status" value="1"/>
</dbReference>
<dbReference type="PROSITE" id="PS50053">
    <property type="entry name" value="UBIQUITIN_2"/>
    <property type="match status" value="1"/>
</dbReference>
<comment type="function">
    <text evidence="1">Ubiquitin-like protein which can be covalently attached to target lysines as a monomer. Does not seem to be involved in protein degradation and may function as an antagonist of ubiquitin in the degradation process (By similarity).</text>
</comment>
<comment type="subunit">
    <text evidence="1">Interacts with SAE2, SCE1, SIZ1 and MMS21 Covalently attached to a number of proteins.</text>
</comment>
<comment type="subcellular location">
    <subcellularLocation>
        <location evidence="1">Nucleus</location>
    </subcellularLocation>
    <subcellularLocation>
        <location evidence="1">Cytoplasm</location>
    </subcellularLocation>
</comment>
<comment type="miscellaneous">
    <text>Stress conditions rapidly and substantially elevates the amount of SUMO1 and SUMO2 conjugates with a concomitant reduction in the amount of free SUMO proteins. The SUMO conjugation system plays an important function in stress protection and/or repair.</text>
</comment>
<comment type="similarity">
    <text evidence="3">Belongs to the ubiquitin family. SUMO subfamily.</text>
</comment>
<keyword id="KW-0963">Cytoplasm</keyword>
<keyword id="KW-1017">Isopeptide bond</keyword>
<keyword id="KW-0539">Nucleus</keyword>
<keyword id="KW-1185">Reference proteome</keyword>
<keyword id="KW-0833">Ubl conjugation pathway</keyword>
<gene>
    <name type="primary">SUMO7</name>
    <name type="synonym">SUM7</name>
    <name type="ordered locus">At5g55855</name>
    <name type="ORF">MWJ3</name>
</gene>
<protein>
    <recommendedName>
        <fullName>Putative small ubiquitin-related modifier 7</fullName>
        <shortName>AtSUMO7</shortName>
    </recommendedName>
</protein>
<feature type="chain" id="PRO_0000397038" description="Putative small ubiquitin-related modifier 7">
    <location>
        <begin position="1"/>
        <end position="95"/>
    </location>
</feature>
<feature type="domain" description="Ubiquitin-like" evidence="2">
    <location>
        <begin position="13"/>
        <end position="90"/>
    </location>
</feature>
<feature type="cross-link" description="Glycyl lysine isopeptide (Gly-Lys) (interchain with K-? in acceptor proteins)">
    <location>
        <position position="90"/>
    </location>
</feature>